<evidence type="ECO:0000250" key="1"/>
<evidence type="ECO:0000250" key="2">
    <source>
        <dbReference type="UniProtKB" id="P01258"/>
    </source>
</evidence>
<evidence type="ECO:0000255" key="3"/>
<evidence type="ECO:0000303" key="4">
    <source>
    </source>
</evidence>
<evidence type="ECO:0000305" key="5"/>
<feature type="signal peptide" evidence="3">
    <location>
        <begin position="1"/>
        <end position="25"/>
    </location>
</feature>
<feature type="propeptide" id="PRO_0000004044" evidence="1">
    <location>
        <begin position="26"/>
        <end position="81"/>
    </location>
</feature>
<feature type="peptide" id="PRO_0000004045" description="Calcitonin">
    <location>
        <begin position="84"/>
        <end position="115"/>
    </location>
</feature>
<feature type="propeptide" id="PRO_0000004046" evidence="1">
    <location>
        <begin position="120"/>
        <end position="140"/>
    </location>
</feature>
<feature type="modified residue" description="Proline amide" evidence="1">
    <location>
        <position position="115"/>
    </location>
</feature>
<feature type="disulfide bond" evidence="2">
    <location>
        <begin position="84"/>
        <end position="90"/>
    </location>
</feature>
<proteinExistence type="evidence at transcript level"/>
<protein>
    <recommendedName>
        <fullName evidence="4">Calcitonin</fullName>
    </recommendedName>
</protein>
<accession>Q9N0V5</accession>
<organism>
    <name type="scientific">Equus caballus</name>
    <name type="common">Horse</name>
    <dbReference type="NCBI Taxonomy" id="9796"/>
    <lineage>
        <taxon>Eukaryota</taxon>
        <taxon>Metazoa</taxon>
        <taxon>Chordata</taxon>
        <taxon>Craniata</taxon>
        <taxon>Vertebrata</taxon>
        <taxon>Euteleostomi</taxon>
        <taxon>Mammalia</taxon>
        <taxon>Eutheria</taxon>
        <taxon>Laurasiatheria</taxon>
        <taxon>Perissodactyla</taxon>
        <taxon>Equidae</taxon>
        <taxon>Equus</taxon>
    </lineage>
</organism>
<keyword id="KW-0025">Alternative splicing</keyword>
<keyword id="KW-0027">Amidation</keyword>
<keyword id="KW-0165">Cleavage on pair of basic residues</keyword>
<keyword id="KW-1015">Disulfide bond</keyword>
<keyword id="KW-0372">Hormone</keyword>
<keyword id="KW-1185">Reference proteome</keyword>
<keyword id="KW-0964">Secreted</keyword>
<keyword id="KW-0732">Signal</keyword>
<reference key="1">
    <citation type="journal article" date="2003" name="Mol. Cell. Endocrinol.">
        <title>Molecular cloning and expression of equine calcitonin, calcitonin gene-related peptide-I, and calcitonin gene-related peptide-II.</title>
        <authorList>
            <person name="Toribio R.E."/>
            <person name="Kohn C.W."/>
            <person name="Leone G.W."/>
            <person name="Capen C.C."/>
            <person name="Rosol T.J."/>
        </authorList>
    </citation>
    <scope>NUCLEOTIDE SEQUENCE [MRNA]</scope>
    <source>
        <tissue>Thyroid</tissue>
    </source>
</reference>
<name>CALC_HORSE</name>
<sequence>MGFWKFSPFLPLSILVLYQVGIIQAAPFRSALESLPDPAVLPEEESRLLLAALVKDYVQMKVRALEQEQETGGASLDSPRAKRCSNLSTCVLGTYTQDLNKFHTFPQTAIGVGAPGKKRVMARGLERDHGPHIGTSQDAY</sequence>
<dbReference type="EMBL" id="AF249307">
    <property type="protein sequence ID" value="AAF72526.1"/>
    <property type="molecule type" value="mRNA"/>
</dbReference>
<dbReference type="RefSeq" id="NP_001075323.1">
    <molecule id="Q9N0V5-1"/>
    <property type="nucleotide sequence ID" value="NM_001081854.3"/>
</dbReference>
<dbReference type="RefSeq" id="XP_014596965.1">
    <property type="nucleotide sequence ID" value="XM_014741479.1"/>
</dbReference>
<dbReference type="FunCoup" id="Q9N0V5">
    <property type="interactions" value="63"/>
</dbReference>
<dbReference type="Ensembl" id="ENSECAT00000008055.3">
    <molecule id="Q9N0V5-1"/>
    <property type="protein sequence ID" value="ENSECAP00000005990.1"/>
    <property type="gene ID" value="ENSECAG00000007825.4"/>
</dbReference>
<dbReference type="GeneID" id="100033906"/>
<dbReference type="KEGG" id="ecb:100033906"/>
<dbReference type="CTD" id="796"/>
<dbReference type="GeneTree" id="ENSGT00940000162876"/>
<dbReference type="HOGENOM" id="CLU_122444_0_0_1"/>
<dbReference type="InParanoid" id="Q9N0V5"/>
<dbReference type="OrthoDB" id="9929923at2759"/>
<dbReference type="TreeFam" id="TF333069"/>
<dbReference type="Proteomes" id="UP000002281">
    <property type="component" value="Chromosome 7"/>
</dbReference>
<dbReference type="Bgee" id="ENSECAG00000007825">
    <property type="expression patterns" value="Expressed in testis and 9 other cell types or tissues"/>
</dbReference>
<dbReference type="ExpressionAtlas" id="Q9N0V5">
    <property type="expression patterns" value="baseline"/>
</dbReference>
<dbReference type="GO" id="GO:0005615">
    <property type="term" value="C:extracellular space"/>
    <property type="evidence" value="ECO:0000318"/>
    <property type="project" value="GO_Central"/>
</dbReference>
<dbReference type="GO" id="GO:0031716">
    <property type="term" value="F:calcitonin receptor binding"/>
    <property type="evidence" value="ECO:0000318"/>
    <property type="project" value="GO_Central"/>
</dbReference>
<dbReference type="GO" id="GO:0005179">
    <property type="term" value="F:hormone activity"/>
    <property type="evidence" value="ECO:0007669"/>
    <property type="project" value="UniProtKB-KW"/>
</dbReference>
<dbReference type="GO" id="GO:0007189">
    <property type="term" value="P:adenylate cyclase-activating G protein-coupled receptor signaling pathway"/>
    <property type="evidence" value="ECO:0000318"/>
    <property type="project" value="GO_Central"/>
</dbReference>
<dbReference type="GO" id="GO:0051480">
    <property type="term" value="P:regulation of cytosolic calcium ion concentration"/>
    <property type="evidence" value="ECO:0000318"/>
    <property type="project" value="GO_Central"/>
</dbReference>
<dbReference type="InterPro" id="IPR021118">
    <property type="entry name" value="Calcitonin"/>
</dbReference>
<dbReference type="InterPro" id="IPR021117">
    <property type="entry name" value="Calcitonin-like"/>
</dbReference>
<dbReference type="InterPro" id="IPR021116">
    <property type="entry name" value="Calcitonin/adrenomedullin"/>
</dbReference>
<dbReference type="InterPro" id="IPR018360">
    <property type="entry name" value="Calcitonin_CS"/>
</dbReference>
<dbReference type="InterPro" id="IPR001693">
    <property type="entry name" value="Calcitonin_peptide-like"/>
</dbReference>
<dbReference type="PANTHER" id="PTHR10505:SF16">
    <property type="entry name" value="CALCITONIN"/>
    <property type="match status" value="1"/>
</dbReference>
<dbReference type="PANTHER" id="PTHR10505">
    <property type="entry name" value="CALCITONIN-RELATED"/>
    <property type="match status" value="1"/>
</dbReference>
<dbReference type="Pfam" id="PF00214">
    <property type="entry name" value="Calc_CGRP_IAPP"/>
    <property type="match status" value="1"/>
</dbReference>
<dbReference type="PRINTS" id="PR00270">
    <property type="entry name" value="CALCITONINA"/>
</dbReference>
<dbReference type="SMART" id="SM00113">
    <property type="entry name" value="CALCITONIN"/>
    <property type="match status" value="1"/>
</dbReference>
<dbReference type="PROSITE" id="PS00258">
    <property type="entry name" value="CALCITONIN"/>
    <property type="match status" value="1"/>
</dbReference>
<gene>
    <name type="primary">CALCA</name>
    <name type="synonym">CALC</name>
</gene>
<comment type="function">
    <text evidence="2">Calcitonin is a peptide hormone that causes a rapid but short-lived drop in the level of calcium and phosphate in blood by promoting the incorporation of those ions in the bones. Calcitonin function is mediated by the calcitonin receptor/CALCR and the CALCR-RAMP2 (AMYR2) receptor complex (By similarity).</text>
</comment>
<comment type="subcellular location">
    <subcellularLocation>
        <location>Secreted</location>
    </subcellularLocation>
</comment>
<comment type="alternative products">
    <event type="alternative splicing"/>
    <isoform>
        <id>Q9N0V5-1</id>
        <name>Calcitonin</name>
        <sequence type="displayed"/>
    </isoform>
    <isoform>
        <id>Q9N0T2-1</id>
        <name>Calcitonin-gene related peptide I</name>
        <sequence type="external"/>
    </isoform>
</comment>
<comment type="similarity">
    <text evidence="5">Belongs to the calcitonin family.</text>
</comment>